<comment type="function">
    <text evidence="2 3">Type II interferon produced by immune cells such as T-cells and NK cells that plays crucial roles in antimicrobial, antiviral, and antitumor responses by activating effector immune cells and enhancing antigen presentation. Primarily signals through the JAK-STAT pathway after interaction with its receptor IFNGR1 to affect gene regulation. Upon IFNG binding, IFNGR1 intracellular domain opens out to allow association of downstream signaling components JAK2, JAK1 and STAT1, leading to STAT1 activation, nuclear translocation and transcription of IFNG-regulated genes. Many of the induced genes are transcription factors such as IRF1 that are able to further drive regulation of a next wave of transcription. Plays a role in class I antigen presentation pathway by inducing a replacement of catalytic proteasome subunits with immunoproteasome subunits. In turn, increases the quantity, quality, and repertoire of peptides for class I MHC loading. Increases the efficiency of peptide generation also by inducing the expression of activator PA28 that associates with the proteasome and alters its proteolytic cleavage preference. Up-regulates as well MHC II complexes on the cell surface by promoting expression of several key molecules such as cathepsins B/CTSB, H/CTSH, and L/CTSL (By similarity). Participates in the regulation of hematopoietic stem cells during development and under homeostatic conditions by affecting their development, quiescence, and differentiation (By similarity).</text>
</comment>
<comment type="subunit">
    <text evidence="2">Homodimer. Interacts with IFNGR1 (via extracellular domain); this interaction promotes IFNGR1 dimerization.</text>
</comment>
<comment type="subcellular location">
    <subcellularLocation>
        <location evidence="2">Secreted</location>
    </subcellularLocation>
</comment>
<comment type="tissue specificity">
    <text>Released primarily from activated T lymphocytes.</text>
</comment>
<comment type="similarity">
    <text evidence="4">Belongs to the type II (or gamma) interferon family.</text>
</comment>
<dbReference type="EMBL" id="X53085">
    <property type="protein sequence ID" value="CAA37252.1"/>
    <property type="molecule type" value="Genomic_DNA"/>
</dbReference>
<dbReference type="EMBL" id="S63967">
    <property type="protein sequence ID" value="AAB20280.2"/>
    <property type="molecule type" value="Genomic_DNA"/>
</dbReference>
<dbReference type="EMBL" id="AF493993">
    <property type="protein sequence ID" value="AAM27193.1"/>
    <property type="molecule type" value="mRNA"/>
</dbReference>
<dbReference type="EMBL" id="AY188090">
    <property type="protein sequence ID" value="AAO34390.1"/>
    <property type="molecule type" value="mRNA"/>
</dbReference>
<dbReference type="EMBL" id="AY293733">
    <property type="protein sequence ID" value="AAQ24335.1"/>
    <property type="molecule type" value="mRNA"/>
</dbReference>
<dbReference type="EMBL" id="DQ666352">
    <property type="protein sequence ID" value="ABG56234.1"/>
    <property type="molecule type" value="mRNA"/>
</dbReference>
<dbReference type="PIR" id="S10513">
    <property type="entry name" value="S10513"/>
</dbReference>
<dbReference type="RefSeq" id="NP_999113.1">
    <property type="nucleotide sequence ID" value="NM_213948.1"/>
</dbReference>
<dbReference type="SMR" id="P17803"/>
<dbReference type="FunCoup" id="P17803">
    <property type="interactions" value="324"/>
</dbReference>
<dbReference type="STRING" id="9823.ENSSSCP00000036242"/>
<dbReference type="GlyCosmos" id="P17803">
    <property type="glycosylation" value="2 sites, No reported glycans"/>
</dbReference>
<dbReference type="GlyGen" id="P17803">
    <property type="glycosylation" value="2 sites"/>
</dbReference>
<dbReference type="PaxDb" id="9823-ENSSSCP00000000511"/>
<dbReference type="Ensembl" id="ENSSSCT00000055560.3">
    <property type="protein sequence ID" value="ENSSSCP00000036242.1"/>
    <property type="gene ID" value="ENSSSCG00000032963.3"/>
</dbReference>
<dbReference type="Ensembl" id="ENSSSCT00015040250.1">
    <property type="protein sequence ID" value="ENSSSCP00015015925.1"/>
    <property type="gene ID" value="ENSSSCG00015030217.1"/>
</dbReference>
<dbReference type="Ensembl" id="ENSSSCT00025093074.1">
    <property type="protein sequence ID" value="ENSSSCP00025040846.1"/>
    <property type="gene ID" value="ENSSSCG00025067625.1"/>
</dbReference>
<dbReference type="Ensembl" id="ENSSSCT00030062911.1">
    <property type="protein sequence ID" value="ENSSSCP00030028770.1"/>
    <property type="gene ID" value="ENSSSCG00030045037.1"/>
</dbReference>
<dbReference type="Ensembl" id="ENSSSCT00035020679.1">
    <property type="protein sequence ID" value="ENSSSCP00035007438.1"/>
    <property type="gene ID" value="ENSSSCG00035016188.1"/>
</dbReference>
<dbReference type="Ensembl" id="ENSSSCT00040105617.1">
    <property type="protein sequence ID" value="ENSSSCP00040048403.1"/>
    <property type="gene ID" value="ENSSSCG00040075965.1"/>
</dbReference>
<dbReference type="Ensembl" id="ENSSSCT00045055148.1">
    <property type="protein sequence ID" value="ENSSSCP00045038447.1"/>
    <property type="gene ID" value="ENSSSCG00045032308.1"/>
</dbReference>
<dbReference type="Ensembl" id="ENSSSCT00050006621.1">
    <property type="protein sequence ID" value="ENSSSCP00050002878.1"/>
    <property type="gene ID" value="ENSSSCG00050004801.1"/>
</dbReference>
<dbReference type="Ensembl" id="ENSSSCT00055038970.1">
    <property type="protein sequence ID" value="ENSSSCP00055030990.1"/>
    <property type="gene ID" value="ENSSSCG00055019876.1"/>
</dbReference>
<dbReference type="Ensembl" id="ENSSSCT00060092468.1">
    <property type="protein sequence ID" value="ENSSSCP00060039973.1"/>
    <property type="gene ID" value="ENSSSCG00060067729.1"/>
</dbReference>
<dbReference type="Ensembl" id="ENSSSCT00065053228.1">
    <property type="protein sequence ID" value="ENSSSCP00065023138.1"/>
    <property type="gene ID" value="ENSSSCG00065038935.1"/>
</dbReference>
<dbReference type="Ensembl" id="ENSSSCT00070017081.1">
    <property type="protein sequence ID" value="ENSSSCP00070014136.1"/>
    <property type="gene ID" value="ENSSSCG00070008806.1"/>
</dbReference>
<dbReference type="Ensembl" id="ENSSSCT00085006647">
    <property type="protein sequence ID" value="ENSSSCP00085004985"/>
    <property type="gene ID" value="ENSSSCG00085003551"/>
</dbReference>
<dbReference type="Ensembl" id="ENSSSCT00090020060">
    <property type="protein sequence ID" value="ENSSSCP00090012328"/>
    <property type="gene ID" value="ENSSSCG00090011425"/>
</dbReference>
<dbReference type="Ensembl" id="ENSSSCT00105045063">
    <property type="protein sequence ID" value="ENSSSCP00105031279"/>
    <property type="gene ID" value="ENSSSCG00105023788"/>
</dbReference>
<dbReference type="Ensembl" id="ENSSSCT00110061814">
    <property type="protein sequence ID" value="ENSSSCP00110043295"/>
    <property type="gene ID" value="ENSSSCG00110032380"/>
</dbReference>
<dbReference type="Ensembl" id="ENSSSCT00115016770">
    <property type="protein sequence ID" value="ENSSSCP00115015826"/>
    <property type="gene ID" value="ENSSSCG00115009752"/>
</dbReference>
<dbReference type="Ensembl" id="ENSSSCT00130043199">
    <property type="protein sequence ID" value="ENSSSCP00130030415"/>
    <property type="gene ID" value="ENSSSCG00130022334"/>
</dbReference>
<dbReference type="GeneID" id="396991"/>
<dbReference type="KEGG" id="ssc:396991"/>
<dbReference type="CTD" id="3458"/>
<dbReference type="VGNC" id="VGNC:89040">
    <property type="gene designation" value="IFNG"/>
</dbReference>
<dbReference type="eggNOG" id="ENOG502SBGW">
    <property type="taxonomic scope" value="Eukaryota"/>
</dbReference>
<dbReference type="GeneTree" id="ENSGT00390000007831"/>
<dbReference type="HOGENOM" id="CLU_135106_0_0_1"/>
<dbReference type="InParanoid" id="P17803"/>
<dbReference type="OMA" id="QIVSMYL"/>
<dbReference type="OrthoDB" id="9937106at2759"/>
<dbReference type="TreeFam" id="TF336308"/>
<dbReference type="Reactome" id="R-SSC-877300">
    <property type="pathway name" value="Interferon gamma signaling"/>
</dbReference>
<dbReference type="Reactome" id="R-SSC-877312">
    <property type="pathway name" value="Regulation of IFNG signaling"/>
</dbReference>
<dbReference type="Reactome" id="R-SSC-9732724">
    <property type="pathway name" value="IFNG signaling activates MAPKs"/>
</dbReference>
<dbReference type="Proteomes" id="UP000008227">
    <property type="component" value="Chromosome 5"/>
</dbReference>
<dbReference type="Proteomes" id="UP000314985">
    <property type="component" value="Unassembled WGS sequence"/>
</dbReference>
<dbReference type="Proteomes" id="UP000694570">
    <property type="component" value="Unplaced"/>
</dbReference>
<dbReference type="Proteomes" id="UP000694571">
    <property type="component" value="Unplaced"/>
</dbReference>
<dbReference type="Proteomes" id="UP000694720">
    <property type="component" value="Unplaced"/>
</dbReference>
<dbReference type="Proteomes" id="UP000694722">
    <property type="component" value="Unplaced"/>
</dbReference>
<dbReference type="Proteomes" id="UP000694723">
    <property type="component" value="Unplaced"/>
</dbReference>
<dbReference type="Proteomes" id="UP000694724">
    <property type="component" value="Unplaced"/>
</dbReference>
<dbReference type="Proteomes" id="UP000694725">
    <property type="component" value="Unplaced"/>
</dbReference>
<dbReference type="Proteomes" id="UP000694726">
    <property type="component" value="Unplaced"/>
</dbReference>
<dbReference type="Proteomes" id="UP000694727">
    <property type="component" value="Unplaced"/>
</dbReference>
<dbReference type="Proteomes" id="UP000694728">
    <property type="component" value="Unplaced"/>
</dbReference>
<dbReference type="Bgee" id="ENSSSCG00000032963">
    <property type="expression patterns" value="Expressed in caecum and 19 other cell types or tissues"/>
</dbReference>
<dbReference type="ExpressionAtlas" id="P17803">
    <property type="expression patterns" value="baseline and differential"/>
</dbReference>
<dbReference type="GO" id="GO:0005615">
    <property type="term" value="C:extracellular space"/>
    <property type="evidence" value="ECO:0000318"/>
    <property type="project" value="GO_Central"/>
</dbReference>
<dbReference type="GO" id="GO:0005125">
    <property type="term" value="F:cytokine activity"/>
    <property type="evidence" value="ECO:0000318"/>
    <property type="project" value="GO_Central"/>
</dbReference>
<dbReference type="GO" id="GO:0005133">
    <property type="term" value="F:type II interferon receptor binding"/>
    <property type="evidence" value="ECO:0007669"/>
    <property type="project" value="InterPro"/>
</dbReference>
<dbReference type="GO" id="GO:0002250">
    <property type="term" value="P:adaptive immune response"/>
    <property type="evidence" value="ECO:0000318"/>
    <property type="project" value="GO_Central"/>
</dbReference>
<dbReference type="GO" id="GO:0048143">
    <property type="term" value="P:astrocyte activation"/>
    <property type="evidence" value="ECO:0007669"/>
    <property type="project" value="Ensembl"/>
</dbReference>
<dbReference type="GO" id="GO:0097696">
    <property type="term" value="P:cell surface receptor signaling pathway via STAT"/>
    <property type="evidence" value="ECO:0007669"/>
    <property type="project" value="Ensembl"/>
</dbReference>
<dbReference type="GO" id="GO:0051607">
    <property type="term" value="P:defense response to virus"/>
    <property type="evidence" value="ECO:0007669"/>
    <property type="project" value="UniProtKB-KW"/>
</dbReference>
<dbReference type="GO" id="GO:0097191">
    <property type="term" value="P:extrinsic apoptotic signaling pathway"/>
    <property type="evidence" value="ECO:0007669"/>
    <property type="project" value="Ensembl"/>
</dbReference>
<dbReference type="GO" id="GO:0038096">
    <property type="term" value="P:Fc-gamma receptor signaling pathway involved in phagocytosis"/>
    <property type="evidence" value="ECO:0007669"/>
    <property type="project" value="Ensembl"/>
</dbReference>
<dbReference type="GO" id="GO:0006959">
    <property type="term" value="P:humoral immune response"/>
    <property type="evidence" value="ECO:0000318"/>
    <property type="project" value="GO_Central"/>
</dbReference>
<dbReference type="GO" id="GO:0002281">
    <property type="term" value="P:macrophage activation involved in immune response"/>
    <property type="evidence" value="ECO:0007669"/>
    <property type="project" value="Ensembl"/>
</dbReference>
<dbReference type="GO" id="GO:0030225">
    <property type="term" value="P:macrophage differentiation"/>
    <property type="evidence" value="ECO:0007669"/>
    <property type="project" value="Ensembl"/>
</dbReference>
<dbReference type="GO" id="GO:0001774">
    <property type="term" value="P:microglial cell activation"/>
    <property type="evidence" value="ECO:0007669"/>
    <property type="project" value="Ensembl"/>
</dbReference>
<dbReference type="GO" id="GO:0045892">
    <property type="term" value="P:negative regulation of DNA-templated transcription"/>
    <property type="evidence" value="ECO:0007669"/>
    <property type="project" value="Ensembl"/>
</dbReference>
<dbReference type="GO" id="GO:0032700">
    <property type="term" value="P:negative regulation of interleukin-17 production"/>
    <property type="evidence" value="ECO:0007669"/>
    <property type="project" value="Ensembl"/>
</dbReference>
<dbReference type="GO" id="GO:0048662">
    <property type="term" value="P:negative regulation of smooth muscle cell proliferation"/>
    <property type="evidence" value="ECO:0007669"/>
    <property type="project" value="Ensembl"/>
</dbReference>
<dbReference type="GO" id="GO:1902004">
    <property type="term" value="P:positive regulation of amyloid-beta formation"/>
    <property type="evidence" value="ECO:0007669"/>
    <property type="project" value="Ensembl"/>
</dbReference>
<dbReference type="GO" id="GO:0010508">
    <property type="term" value="P:positive regulation of autophagy"/>
    <property type="evidence" value="ECO:0000250"/>
    <property type="project" value="UniProtKB"/>
</dbReference>
<dbReference type="GO" id="GO:0032834">
    <property type="term" value="P:positive regulation of CD4-positive, CD25-positive, alpha-beta regulatory T cell differentiation involved in immune response"/>
    <property type="evidence" value="ECO:0007669"/>
    <property type="project" value="Ensembl"/>
</dbReference>
<dbReference type="GO" id="GO:0032722">
    <property type="term" value="P:positive regulation of chemokine production"/>
    <property type="evidence" value="ECO:0007669"/>
    <property type="project" value="Ensembl"/>
</dbReference>
<dbReference type="GO" id="GO:0010634">
    <property type="term" value="P:positive regulation of epithelial cell migration"/>
    <property type="evidence" value="ECO:0007669"/>
    <property type="project" value="Ensembl"/>
</dbReference>
<dbReference type="GO" id="GO:0060552">
    <property type="term" value="P:positive regulation of fructose 1,6-bisphosphate metabolic process"/>
    <property type="evidence" value="ECO:0007669"/>
    <property type="project" value="Ensembl"/>
</dbReference>
<dbReference type="GO" id="GO:0050729">
    <property type="term" value="P:positive regulation of inflammatory response"/>
    <property type="evidence" value="ECO:0007669"/>
    <property type="project" value="Ensembl"/>
</dbReference>
<dbReference type="GO" id="GO:0032735">
    <property type="term" value="P:positive regulation of interleukin-12 production"/>
    <property type="evidence" value="ECO:0007669"/>
    <property type="project" value="Ensembl"/>
</dbReference>
<dbReference type="GO" id="GO:0032747">
    <property type="term" value="P:positive regulation of interleukin-23 production"/>
    <property type="evidence" value="ECO:0007669"/>
    <property type="project" value="Ensembl"/>
</dbReference>
<dbReference type="GO" id="GO:0032755">
    <property type="term" value="P:positive regulation of interleukin-6 production"/>
    <property type="evidence" value="ECO:0007669"/>
    <property type="project" value="Ensembl"/>
</dbReference>
<dbReference type="GO" id="GO:0051044">
    <property type="term" value="P:positive regulation of membrane protein ectodomain proteolysis"/>
    <property type="evidence" value="ECO:0007669"/>
    <property type="project" value="Ensembl"/>
</dbReference>
<dbReference type="GO" id="GO:0050769">
    <property type="term" value="P:positive regulation of neurogenesis"/>
    <property type="evidence" value="ECO:0007669"/>
    <property type="project" value="Ensembl"/>
</dbReference>
<dbReference type="GO" id="GO:0045429">
    <property type="term" value="P:positive regulation of nitric oxide biosynthetic process"/>
    <property type="evidence" value="ECO:0007669"/>
    <property type="project" value="Ensembl"/>
</dbReference>
<dbReference type="GO" id="GO:0045672">
    <property type="term" value="P:positive regulation of osteoclast differentiation"/>
    <property type="evidence" value="ECO:0007669"/>
    <property type="project" value="Ensembl"/>
</dbReference>
<dbReference type="GO" id="GO:0042307">
    <property type="term" value="P:positive regulation of protein import into nucleus"/>
    <property type="evidence" value="ECO:0007669"/>
    <property type="project" value="Ensembl"/>
</dbReference>
<dbReference type="GO" id="GO:0031334">
    <property type="term" value="P:positive regulation of protein-containing complex assembly"/>
    <property type="evidence" value="ECO:0007669"/>
    <property type="project" value="Ensembl"/>
</dbReference>
<dbReference type="GO" id="GO:0034393">
    <property type="term" value="P:positive regulation of smooth muscle cell apoptotic process"/>
    <property type="evidence" value="ECO:0007669"/>
    <property type="project" value="Ensembl"/>
</dbReference>
<dbReference type="GO" id="GO:2000309">
    <property type="term" value="P:positive regulation of tumor necrosis factor (ligand) superfamily member 11 production"/>
    <property type="evidence" value="ECO:0007669"/>
    <property type="project" value="Ensembl"/>
</dbReference>
<dbReference type="GO" id="GO:0060557">
    <property type="term" value="P:positive regulation of vitamin D biosynthetic process"/>
    <property type="evidence" value="ECO:0007669"/>
    <property type="project" value="Ensembl"/>
</dbReference>
<dbReference type="GO" id="GO:0050796">
    <property type="term" value="P:regulation of insulin secretion"/>
    <property type="evidence" value="ECO:0007669"/>
    <property type="project" value="Ensembl"/>
</dbReference>
<dbReference type="GO" id="GO:0060333">
    <property type="term" value="P:type II interferon-mediated signaling pathway"/>
    <property type="evidence" value="ECO:0007669"/>
    <property type="project" value="Ensembl"/>
</dbReference>
<dbReference type="GO" id="GO:0038196">
    <property type="term" value="P:type III interferon-mediated signaling pathway"/>
    <property type="evidence" value="ECO:0007669"/>
    <property type="project" value="Ensembl"/>
</dbReference>
<dbReference type="FunFam" id="1.20.1250.10:FF:000007">
    <property type="entry name" value="Interferon gamma"/>
    <property type="match status" value="1"/>
</dbReference>
<dbReference type="Gene3D" id="1.20.1250.10">
    <property type="match status" value="1"/>
</dbReference>
<dbReference type="InterPro" id="IPR009079">
    <property type="entry name" value="4_helix_cytokine-like_core"/>
</dbReference>
<dbReference type="InterPro" id="IPR002069">
    <property type="entry name" value="Interferon_gamma"/>
</dbReference>
<dbReference type="PANTHER" id="PTHR11419">
    <property type="entry name" value="INTERFERON GAMMA"/>
    <property type="match status" value="1"/>
</dbReference>
<dbReference type="PANTHER" id="PTHR11419:SF0">
    <property type="entry name" value="INTERFERON GAMMA"/>
    <property type="match status" value="1"/>
</dbReference>
<dbReference type="Pfam" id="PF00714">
    <property type="entry name" value="IFN-gamma"/>
    <property type="match status" value="1"/>
</dbReference>
<dbReference type="PIRSF" id="PIRSF001936">
    <property type="entry name" value="IFN-gamma"/>
    <property type="match status" value="1"/>
</dbReference>
<dbReference type="SUPFAM" id="SSF47266">
    <property type="entry name" value="4-helical cytokines"/>
    <property type="match status" value="1"/>
</dbReference>
<proteinExistence type="evidence at transcript level"/>
<evidence type="ECO:0000250" key="1"/>
<evidence type="ECO:0000250" key="2">
    <source>
        <dbReference type="UniProtKB" id="P01579"/>
    </source>
</evidence>
<evidence type="ECO:0000250" key="3">
    <source>
        <dbReference type="UniProtKB" id="P01580"/>
    </source>
</evidence>
<evidence type="ECO:0000305" key="4"/>
<sequence length="166" mass="19419">MSYTTYFLAFQLCVTLCFSGSYCQAPFFKEITILKDYFNASTSDVPNGGPLFLEILKNWKEESDKKIIQSQIVSFYFKFFEIFKDNQAIQRSMDVIKQDMFQRFLNGSSGKLNDFEKLIKIPVDNLQIQRKAISELIKVMNDLSPRSNLRKRKRSQTMFQGQRASK</sequence>
<accession>P17803</accession>
<accession>Q53ZP3</accession>
<feature type="signal peptide" evidence="1">
    <location>
        <begin position="1"/>
        <end position="23"/>
    </location>
</feature>
<feature type="chain" id="PRO_0000016455" description="Interferon gamma">
    <location>
        <begin position="24"/>
        <end position="166"/>
    </location>
</feature>
<feature type="modified residue" description="Pyrrolidone carboxylic acid" evidence="2">
    <location>
        <position position="24"/>
    </location>
</feature>
<feature type="glycosylation site" description="N-linked (GlcNAc...) asparagine" evidence="1">
    <location>
        <position position="39"/>
    </location>
</feature>
<feature type="glycosylation site" description="N-linked (GlcNAc...) asparagine" evidence="1">
    <location>
        <position position="106"/>
    </location>
</feature>
<organism>
    <name type="scientific">Sus scrofa</name>
    <name type="common">Pig</name>
    <dbReference type="NCBI Taxonomy" id="9823"/>
    <lineage>
        <taxon>Eukaryota</taxon>
        <taxon>Metazoa</taxon>
        <taxon>Chordata</taxon>
        <taxon>Craniata</taxon>
        <taxon>Vertebrata</taxon>
        <taxon>Euteleostomi</taxon>
        <taxon>Mammalia</taxon>
        <taxon>Eutheria</taxon>
        <taxon>Laurasiatheria</taxon>
        <taxon>Artiodactyla</taxon>
        <taxon>Suina</taxon>
        <taxon>Suidae</taxon>
        <taxon>Sus</taxon>
    </lineage>
</organism>
<reference key="1">
    <citation type="journal article" date="1990" name="Nucleic Acids Res.">
        <title>Sequence of the porcine interferon-gamma (IFN-gamma) gene.</title>
        <authorList>
            <person name="Dukmans R."/>
            <person name="Vandenbroeck K."/>
            <person name="Beuken E."/>
            <person name="Billiau A."/>
        </authorList>
    </citation>
    <scope>NUCLEOTIDE SEQUENCE [GENOMIC DNA]</scope>
    <source>
        <tissue>Liver</tissue>
    </source>
</reference>
<reference key="2">
    <citation type="journal article" date="1991" name="Biochem. Biophys. Res. Commun.">
        <title>Engineering by PCR-based exon amplification of the genomic porcine interferon-gamma DNA for expression in Escherichia coli.</title>
        <authorList>
            <person name="Vandenbroeck K."/>
            <person name="Dijkmans R."/>
            <person name="van Aerschot A."/>
            <person name="Billiau A."/>
        </authorList>
    </citation>
    <scope>NUCLEOTIDE SEQUENCE [GENOMIC DNA]</scope>
</reference>
<reference key="3">
    <citation type="submission" date="2002-03" db="EMBL/GenBank/DDBJ databases">
        <title>Cloning and sequence analysis of gamma interferon gene from Chenghua swine.</title>
        <authorList>
            <person name="Li J."/>
            <person name="Gao R."/>
            <person name="Wu M."/>
            <person name="Long Z."/>
            <person name="Tang M."/>
            <person name="Shen Y."/>
            <person name="Liu S."/>
        </authorList>
    </citation>
    <scope>NUCLEOTIDE SEQUENCE [MRNA]</scope>
    <source>
        <strain>Chenghua</strain>
        <tissue>Blood</tissue>
    </source>
</reference>
<reference key="4">
    <citation type="submission" date="2002-11" db="EMBL/GenBank/DDBJ databases">
        <title>Isolation of porcine interferon gamma (IFN-gamma) cDNA.</title>
        <authorList>
            <person name="Fan Y.-H."/>
            <person name="Chiou S.-H."/>
        </authorList>
    </citation>
    <scope>NUCLEOTIDE SEQUENCE [MRNA]</scope>
</reference>
<reference key="5">
    <citation type="journal article" date="2003" name="Zhongguo Shouyi Ke-ji">
        <title>Cloning and analyzing of interferon gamma cDNA from the lymphocyte of Tibet pig.</title>
        <authorList>
            <person name="Li H."/>
            <person name="Gao R."/>
            <person name="Wu M."/>
            <person name="Wang L."/>
            <person name="Din X."/>
            <person name="Liu S."/>
        </authorList>
    </citation>
    <scope>NUCLEOTIDE SEQUENCE [MRNA]</scope>
    <source>
        <strain>Tibetan</strain>
    </source>
</reference>
<reference key="6">
    <citation type="submission" date="2006-06" db="EMBL/GenBank/DDBJ databases">
        <title>Cloning and expression of Meishan porcine interferon-gamma.</title>
        <authorList>
            <person name="Yao Q."/>
            <person name="Qian P."/>
            <person name="Chen H."/>
        </authorList>
    </citation>
    <scope>NUCLEOTIDE SEQUENCE [MRNA]</scope>
    <source>
        <strain>Meishan</strain>
    </source>
</reference>
<gene>
    <name type="primary">IFNG</name>
</gene>
<name>IFNG_PIG</name>
<protein>
    <recommendedName>
        <fullName>Interferon gamma</fullName>
        <shortName>IFN-gamma</shortName>
    </recommendedName>
</protein>
<keyword id="KW-0051">Antiviral defense</keyword>
<keyword id="KW-0202">Cytokine</keyword>
<keyword id="KW-0325">Glycoprotein</keyword>
<keyword id="KW-0341">Growth regulation</keyword>
<keyword id="KW-0873">Pyrrolidone carboxylic acid</keyword>
<keyword id="KW-1185">Reference proteome</keyword>
<keyword id="KW-0964">Secreted</keyword>
<keyword id="KW-0732">Signal</keyword>